<protein>
    <recommendedName>
        <fullName evidence="1">S-ribosylhomocysteine lyase</fullName>
        <ecNumber evidence="1">4.4.1.21</ecNumber>
    </recommendedName>
    <alternativeName>
        <fullName evidence="1">AI-2 synthesis protein</fullName>
    </alternativeName>
    <alternativeName>
        <fullName evidence="1">Autoinducer-2 production protein LuxS</fullName>
    </alternativeName>
</protein>
<reference key="1">
    <citation type="journal article" date="2006" name="Proc. Natl. Acad. Sci. U.S.A.">
        <title>Multireplicon genome architecture of Lactobacillus salivarius.</title>
        <authorList>
            <person name="Claesson M.J."/>
            <person name="Li Y."/>
            <person name="Leahy S."/>
            <person name="Canchaya C."/>
            <person name="van Pijkeren J.P."/>
            <person name="Cerdeno-Tarraga A.M."/>
            <person name="Parkhill J."/>
            <person name="Flynn S."/>
            <person name="O'Sullivan G.C."/>
            <person name="Collins J.K."/>
            <person name="Higgins D."/>
            <person name="Shanahan F."/>
            <person name="Fitzgerald G.F."/>
            <person name="van Sinderen D."/>
            <person name="O'Toole P.W."/>
        </authorList>
    </citation>
    <scope>NUCLEOTIDE SEQUENCE [LARGE SCALE GENOMIC DNA]</scope>
    <source>
        <strain>UCC118</strain>
    </source>
</reference>
<proteinExistence type="inferred from homology"/>
<organism>
    <name type="scientific">Ligilactobacillus salivarius (strain UCC118)</name>
    <name type="common">Lactobacillus salivarius</name>
    <dbReference type="NCBI Taxonomy" id="362948"/>
    <lineage>
        <taxon>Bacteria</taxon>
        <taxon>Bacillati</taxon>
        <taxon>Bacillota</taxon>
        <taxon>Bacilli</taxon>
        <taxon>Lactobacillales</taxon>
        <taxon>Lactobacillaceae</taxon>
        <taxon>Ligilactobacillus</taxon>
    </lineage>
</organism>
<gene>
    <name evidence="1" type="primary">luxS</name>
    <name type="ordered locus">LSL_1173</name>
</gene>
<comment type="function">
    <text evidence="1">Involved in the synthesis of autoinducer 2 (AI-2) which is secreted by bacteria and is used to communicate both the cell density and the metabolic potential of the environment. The regulation of gene expression in response to changes in cell density is called quorum sensing. Catalyzes the transformation of S-ribosylhomocysteine (RHC) to homocysteine (HC) and 4,5-dihydroxy-2,3-pentadione (DPD).</text>
</comment>
<comment type="catalytic activity">
    <reaction evidence="1">
        <text>S-(5-deoxy-D-ribos-5-yl)-L-homocysteine = (S)-4,5-dihydroxypentane-2,3-dione + L-homocysteine</text>
        <dbReference type="Rhea" id="RHEA:17753"/>
        <dbReference type="ChEBI" id="CHEBI:29484"/>
        <dbReference type="ChEBI" id="CHEBI:58195"/>
        <dbReference type="ChEBI" id="CHEBI:58199"/>
        <dbReference type="EC" id="4.4.1.21"/>
    </reaction>
</comment>
<comment type="cofactor">
    <cofactor evidence="1">
        <name>Fe cation</name>
        <dbReference type="ChEBI" id="CHEBI:24875"/>
    </cofactor>
    <text evidence="1">Binds 1 Fe cation per subunit.</text>
</comment>
<comment type="subunit">
    <text evidence="1">Homodimer.</text>
</comment>
<comment type="similarity">
    <text evidence="1">Belongs to the LuxS family.</text>
</comment>
<sequence>MAKVESFTLDHTAVKAPYVRLITVETGAKGDKISNFDLRFVQPNENAIPTAGLHTIEHMLAGYLRDHMDGVIDCSPFGCRTGFHLIMWGEHDTTEVATALKASLNDIINASWEDVQGTDIKSCGNYRDHSLFSAQEWCKKILADGISTDPFERKVI</sequence>
<name>LUXS_LIGS1</name>
<dbReference type="EC" id="4.4.1.21" evidence="1"/>
<dbReference type="EMBL" id="CP000233">
    <property type="protein sequence ID" value="ABD99981.1"/>
    <property type="molecule type" value="Genomic_DNA"/>
</dbReference>
<dbReference type="RefSeq" id="WP_003700626.1">
    <property type="nucleotide sequence ID" value="NC_007929.1"/>
</dbReference>
<dbReference type="RefSeq" id="YP_536064.1">
    <property type="nucleotide sequence ID" value="NC_007929.1"/>
</dbReference>
<dbReference type="SMR" id="Q1WT73"/>
<dbReference type="STRING" id="362948.LSL_1173"/>
<dbReference type="KEGG" id="lsl:LSL_1173"/>
<dbReference type="PATRIC" id="fig|362948.14.peg.1247"/>
<dbReference type="HOGENOM" id="CLU_107531_2_1_9"/>
<dbReference type="OrthoDB" id="9788129at2"/>
<dbReference type="Proteomes" id="UP000006559">
    <property type="component" value="Chromosome"/>
</dbReference>
<dbReference type="GO" id="GO:0005506">
    <property type="term" value="F:iron ion binding"/>
    <property type="evidence" value="ECO:0007669"/>
    <property type="project" value="InterPro"/>
</dbReference>
<dbReference type="GO" id="GO:0043768">
    <property type="term" value="F:S-ribosylhomocysteine lyase activity"/>
    <property type="evidence" value="ECO:0007669"/>
    <property type="project" value="UniProtKB-UniRule"/>
</dbReference>
<dbReference type="GO" id="GO:0009372">
    <property type="term" value="P:quorum sensing"/>
    <property type="evidence" value="ECO:0007669"/>
    <property type="project" value="UniProtKB-UniRule"/>
</dbReference>
<dbReference type="Gene3D" id="3.30.1360.80">
    <property type="entry name" value="S-ribosylhomocysteinase (LuxS)"/>
    <property type="match status" value="1"/>
</dbReference>
<dbReference type="HAMAP" id="MF_00091">
    <property type="entry name" value="LuxS"/>
    <property type="match status" value="1"/>
</dbReference>
<dbReference type="InterPro" id="IPR037005">
    <property type="entry name" value="LuxS_sf"/>
</dbReference>
<dbReference type="InterPro" id="IPR011249">
    <property type="entry name" value="Metalloenz_LuxS/M16"/>
</dbReference>
<dbReference type="InterPro" id="IPR003815">
    <property type="entry name" value="S-ribosylhomocysteinase"/>
</dbReference>
<dbReference type="NCBIfam" id="NF002606">
    <property type="entry name" value="PRK02260.2-4"/>
    <property type="match status" value="1"/>
</dbReference>
<dbReference type="NCBIfam" id="NF002608">
    <property type="entry name" value="PRK02260.3-1"/>
    <property type="match status" value="1"/>
</dbReference>
<dbReference type="PANTHER" id="PTHR35799">
    <property type="entry name" value="S-RIBOSYLHOMOCYSTEINE LYASE"/>
    <property type="match status" value="1"/>
</dbReference>
<dbReference type="PANTHER" id="PTHR35799:SF1">
    <property type="entry name" value="S-RIBOSYLHOMOCYSTEINE LYASE"/>
    <property type="match status" value="1"/>
</dbReference>
<dbReference type="Pfam" id="PF02664">
    <property type="entry name" value="LuxS"/>
    <property type="match status" value="1"/>
</dbReference>
<dbReference type="PIRSF" id="PIRSF006160">
    <property type="entry name" value="AI2"/>
    <property type="match status" value="1"/>
</dbReference>
<dbReference type="PRINTS" id="PR01487">
    <property type="entry name" value="LUXSPROTEIN"/>
</dbReference>
<dbReference type="SUPFAM" id="SSF63411">
    <property type="entry name" value="LuxS/MPP-like metallohydrolase"/>
    <property type="match status" value="1"/>
</dbReference>
<accession>Q1WT73</accession>
<keyword id="KW-0071">Autoinducer synthesis</keyword>
<keyword id="KW-0408">Iron</keyword>
<keyword id="KW-0456">Lyase</keyword>
<keyword id="KW-0479">Metal-binding</keyword>
<keyword id="KW-0673">Quorum sensing</keyword>
<keyword id="KW-1185">Reference proteome</keyword>
<evidence type="ECO:0000255" key="1">
    <source>
        <dbReference type="HAMAP-Rule" id="MF_00091"/>
    </source>
</evidence>
<feature type="chain" id="PRO_0000298010" description="S-ribosylhomocysteine lyase">
    <location>
        <begin position="1"/>
        <end position="156"/>
    </location>
</feature>
<feature type="binding site" evidence="1">
    <location>
        <position position="54"/>
    </location>
    <ligand>
        <name>Fe cation</name>
        <dbReference type="ChEBI" id="CHEBI:24875"/>
    </ligand>
</feature>
<feature type="binding site" evidence="1">
    <location>
        <position position="58"/>
    </location>
    <ligand>
        <name>Fe cation</name>
        <dbReference type="ChEBI" id="CHEBI:24875"/>
    </ligand>
</feature>
<feature type="binding site" evidence="1">
    <location>
        <position position="123"/>
    </location>
    <ligand>
        <name>Fe cation</name>
        <dbReference type="ChEBI" id="CHEBI:24875"/>
    </ligand>
</feature>